<organism>
    <name type="scientific">Methanosarcina mazei (strain ATCC BAA-159 / DSM 3647 / Goe1 / Go1 / JCM 11833 / OCM 88)</name>
    <name type="common">Methanosarcina frisia</name>
    <dbReference type="NCBI Taxonomy" id="192952"/>
    <lineage>
        <taxon>Archaea</taxon>
        <taxon>Methanobacteriati</taxon>
        <taxon>Methanobacteriota</taxon>
        <taxon>Stenosarchaea group</taxon>
        <taxon>Methanomicrobia</taxon>
        <taxon>Methanosarcinales</taxon>
        <taxon>Methanosarcinaceae</taxon>
        <taxon>Methanosarcina</taxon>
    </lineage>
</organism>
<reference key="1">
    <citation type="journal article" date="2002" name="J. Mol. Microbiol. Biotechnol.">
        <title>The genome of Methanosarcina mazei: evidence for lateral gene transfer between Bacteria and Archaea.</title>
        <authorList>
            <person name="Deppenmeier U."/>
            <person name="Johann A."/>
            <person name="Hartsch T."/>
            <person name="Merkl R."/>
            <person name="Schmitz R.A."/>
            <person name="Martinez-Arias R."/>
            <person name="Henne A."/>
            <person name="Wiezer A."/>
            <person name="Baeumer S."/>
            <person name="Jacobi C."/>
            <person name="Brueggemann H."/>
            <person name="Lienard T."/>
            <person name="Christmann A."/>
            <person name="Boemecke M."/>
            <person name="Steckel S."/>
            <person name="Bhattacharyya A."/>
            <person name="Lykidis A."/>
            <person name="Overbeek R."/>
            <person name="Klenk H.-P."/>
            <person name="Gunsalus R.P."/>
            <person name="Fritz H.-J."/>
            <person name="Gottschalk G."/>
        </authorList>
    </citation>
    <scope>NUCLEOTIDE SEQUENCE [LARGE SCALE GENOMIC DNA]</scope>
    <source>
        <strain>ATCC BAA-159 / DSM 3647 / Goe1 / Go1 / JCM 11833 / OCM 88</strain>
    </source>
</reference>
<keyword id="KW-0067">ATP-binding</keyword>
<keyword id="KW-1003">Cell membrane</keyword>
<keyword id="KW-0472">Membrane</keyword>
<keyword id="KW-0547">Nucleotide-binding</keyword>
<keyword id="KW-1278">Translocase</keyword>
<keyword id="KW-0813">Transport</keyword>
<proteinExistence type="inferred from homology"/>
<feature type="chain" id="PRO_0000092144" description="Putative ABC transporter ATP-binding protein MM_1037">
    <location>
        <begin position="1"/>
        <end position="274"/>
    </location>
</feature>
<feature type="domain" description="ABC transporter" evidence="2">
    <location>
        <begin position="2"/>
        <end position="235"/>
    </location>
</feature>
<feature type="binding site" evidence="2">
    <location>
        <begin position="35"/>
        <end position="42"/>
    </location>
    <ligand>
        <name>ATP</name>
        <dbReference type="ChEBI" id="CHEBI:30616"/>
    </ligand>
</feature>
<comment type="function">
    <text evidence="1">Probably part of an ABC transporter complex. Responsible for energy coupling to the transport system (By similarity).</text>
</comment>
<comment type="subcellular location">
    <subcellularLocation>
        <location evidence="1">Cell membrane</location>
        <topology evidence="1">Peripheral membrane protein</topology>
    </subcellularLocation>
</comment>
<comment type="similarity">
    <text evidence="3">Belongs to the ABC transporter superfamily.</text>
</comment>
<accession>Q8PY27</accession>
<sequence>MIRLENVSYCYPDGTPALTNINLTIRKGEYLGIIGRNGSGKSTLALHLNGLRRPQKGKVIVKGIDAGDFSKLQEVRKIVGIVFQNPETQFIGRTVEEDLAFGPENLCLPPTEIRKRVDRALAEIKLEKYRHHSPKSLSGGQGQCVALAGVLTMEPECLVFDEVTSMLDPDSGETVLRRIKKLHEKGKTIVYTTHNLEELHVADRILVMDRGRIVLEGEPENVLSDPSLKDLGLTPPSLIELAEQLKKHEIEISWENTSSPSSFAEELCRLFLKT</sequence>
<dbReference type="EC" id="7.-.-.-"/>
<dbReference type="EMBL" id="AE008384">
    <property type="protein sequence ID" value="AAM30733.1"/>
    <property type="molecule type" value="Genomic_DNA"/>
</dbReference>
<dbReference type="RefSeq" id="WP_011032986.1">
    <property type="nucleotide sequence ID" value="NC_003901.1"/>
</dbReference>
<dbReference type="SMR" id="Q8PY27"/>
<dbReference type="GeneID" id="1479379"/>
<dbReference type="KEGG" id="mma:MM_1037"/>
<dbReference type="PATRIC" id="fig|192952.21.peg.1216"/>
<dbReference type="eggNOG" id="arCOG00202">
    <property type="taxonomic scope" value="Archaea"/>
</dbReference>
<dbReference type="HOGENOM" id="CLU_000604_1_22_2"/>
<dbReference type="Proteomes" id="UP000000595">
    <property type="component" value="Chromosome"/>
</dbReference>
<dbReference type="GO" id="GO:0043190">
    <property type="term" value="C:ATP-binding cassette (ABC) transporter complex"/>
    <property type="evidence" value="ECO:0007669"/>
    <property type="project" value="TreeGrafter"/>
</dbReference>
<dbReference type="GO" id="GO:0005524">
    <property type="term" value="F:ATP binding"/>
    <property type="evidence" value="ECO:0007669"/>
    <property type="project" value="UniProtKB-KW"/>
</dbReference>
<dbReference type="GO" id="GO:0016887">
    <property type="term" value="F:ATP hydrolysis activity"/>
    <property type="evidence" value="ECO:0007669"/>
    <property type="project" value="InterPro"/>
</dbReference>
<dbReference type="GO" id="GO:0042626">
    <property type="term" value="F:ATPase-coupled transmembrane transporter activity"/>
    <property type="evidence" value="ECO:0007669"/>
    <property type="project" value="TreeGrafter"/>
</dbReference>
<dbReference type="CDD" id="cd03225">
    <property type="entry name" value="ABC_cobalt_CbiO_domain1"/>
    <property type="match status" value="1"/>
</dbReference>
<dbReference type="FunFam" id="3.40.50.300:FF:000224">
    <property type="entry name" value="Energy-coupling factor transporter ATP-binding protein EcfA"/>
    <property type="match status" value="1"/>
</dbReference>
<dbReference type="Gene3D" id="3.40.50.300">
    <property type="entry name" value="P-loop containing nucleotide triphosphate hydrolases"/>
    <property type="match status" value="1"/>
</dbReference>
<dbReference type="InterPro" id="IPR003593">
    <property type="entry name" value="AAA+_ATPase"/>
</dbReference>
<dbReference type="InterPro" id="IPR003439">
    <property type="entry name" value="ABC_transporter-like_ATP-bd"/>
</dbReference>
<dbReference type="InterPro" id="IPR015856">
    <property type="entry name" value="ABC_transpr_CbiO/EcfA_su"/>
</dbReference>
<dbReference type="InterPro" id="IPR050095">
    <property type="entry name" value="ECF_ABC_transporter_ATP-bd"/>
</dbReference>
<dbReference type="InterPro" id="IPR030947">
    <property type="entry name" value="EcfA_1"/>
</dbReference>
<dbReference type="InterPro" id="IPR027417">
    <property type="entry name" value="P-loop_NTPase"/>
</dbReference>
<dbReference type="NCBIfam" id="TIGR04520">
    <property type="entry name" value="ECF_ATPase_1"/>
    <property type="match status" value="1"/>
</dbReference>
<dbReference type="PANTHER" id="PTHR43553:SF24">
    <property type="entry name" value="ENERGY-COUPLING FACTOR TRANSPORTER ATP-BINDING PROTEIN ECFA1"/>
    <property type="match status" value="1"/>
</dbReference>
<dbReference type="PANTHER" id="PTHR43553">
    <property type="entry name" value="HEAVY METAL TRANSPORTER"/>
    <property type="match status" value="1"/>
</dbReference>
<dbReference type="Pfam" id="PF00005">
    <property type="entry name" value="ABC_tran"/>
    <property type="match status" value="1"/>
</dbReference>
<dbReference type="SMART" id="SM00382">
    <property type="entry name" value="AAA"/>
    <property type="match status" value="1"/>
</dbReference>
<dbReference type="SUPFAM" id="SSF52540">
    <property type="entry name" value="P-loop containing nucleoside triphosphate hydrolases"/>
    <property type="match status" value="1"/>
</dbReference>
<dbReference type="PROSITE" id="PS50893">
    <property type="entry name" value="ABC_TRANSPORTER_2"/>
    <property type="match status" value="1"/>
</dbReference>
<name>Y1037_METMA</name>
<protein>
    <recommendedName>
        <fullName>Putative ABC transporter ATP-binding protein MM_1037</fullName>
        <ecNumber>7.-.-.-</ecNumber>
    </recommendedName>
</protein>
<gene>
    <name type="ordered locus">MM_1037</name>
</gene>
<evidence type="ECO:0000250" key="1"/>
<evidence type="ECO:0000255" key="2">
    <source>
        <dbReference type="PROSITE-ProRule" id="PRU00434"/>
    </source>
</evidence>
<evidence type="ECO:0000305" key="3"/>